<evidence type="ECO:0000255" key="1">
    <source>
        <dbReference type="HAMAP-Rule" id="MF_00753"/>
    </source>
</evidence>
<proteinExistence type="inferred from homology"/>
<accession>B7N5K6</accession>
<protein>
    <recommendedName>
        <fullName evidence="1">Anaerobic glycerol-3-phosphate dehydrogenase subunit B</fullName>
        <shortName evidence="1">Anaerobic G-3-P dehydrogenase subunit B</shortName>
        <shortName evidence="1">Anaerobic G3Pdhase B</shortName>
        <ecNumber evidence="1">1.1.5.3</ecNumber>
    </recommendedName>
</protein>
<reference key="1">
    <citation type="journal article" date="2009" name="PLoS Genet.">
        <title>Organised genome dynamics in the Escherichia coli species results in highly diverse adaptive paths.</title>
        <authorList>
            <person name="Touchon M."/>
            <person name="Hoede C."/>
            <person name="Tenaillon O."/>
            <person name="Barbe V."/>
            <person name="Baeriswyl S."/>
            <person name="Bidet P."/>
            <person name="Bingen E."/>
            <person name="Bonacorsi S."/>
            <person name="Bouchier C."/>
            <person name="Bouvet O."/>
            <person name="Calteau A."/>
            <person name="Chiapello H."/>
            <person name="Clermont O."/>
            <person name="Cruveiller S."/>
            <person name="Danchin A."/>
            <person name="Diard M."/>
            <person name="Dossat C."/>
            <person name="Karoui M.E."/>
            <person name="Frapy E."/>
            <person name="Garry L."/>
            <person name="Ghigo J.M."/>
            <person name="Gilles A.M."/>
            <person name="Johnson J."/>
            <person name="Le Bouguenec C."/>
            <person name="Lescat M."/>
            <person name="Mangenot S."/>
            <person name="Martinez-Jehanne V."/>
            <person name="Matic I."/>
            <person name="Nassif X."/>
            <person name="Oztas S."/>
            <person name="Petit M.A."/>
            <person name="Pichon C."/>
            <person name="Rouy Z."/>
            <person name="Ruf C.S."/>
            <person name="Schneider D."/>
            <person name="Tourret J."/>
            <person name="Vacherie B."/>
            <person name="Vallenet D."/>
            <person name="Medigue C."/>
            <person name="Rocha E.P.C."/>
            <person name="Denamur E."/>
        </authorList>
    </citation>
    <scope>NUCLEOTIDE SEQUENCE [LARGE SCALE GENOMIC DNA]</scope>
    <source>
        <strain>UMN026 / ExPEC</strain>
    </source>
</reference>
<name>GLPB_ECOLU</name>
<comment type="function">
    <text evidence="1">Conversion of glycerol 3-phosphate to dihydroxyacetone. Uses fumarate or nitrate as electron acceptor.</text>
</comment>
<comment type="catalytic activity">
    <reaction evidence="1">
        <text>a quinone + sn-glycerol 3-phosphate = dihydroxyacetone phosphate + a quinol</text>
        <dbReference type="Rhea" id="RHEA:18977"/>
        <dbReference type="ChEBI" id="CHEBI:24646"/>
        <dbReference type="ChEBI" id="CHEBI:57597"/>
        <dbReference type="ChEBI" id="CHEBI:57642"/>
        <dbReference type="ChEBI" id="CHEBI:132124"/>
        <dbReference type="EC" id="1.1.5.3"/>
    </reaction>
</comment>
<comment type="cofactor">
    <cofactor evidence="1">
        <name>FMN</name>
        <dbReference type="ChEBI" id="CHEBI:58210"/>
    </cofactor>
</comment>
<comment type="pathway">
    <text evidence="1">Polyol metabolism; glycerol degradation via glycerol kinase pathway; glycerone phosphate from sn-glycerol 3-phosphate (anaerobic route): step 1/1.</text>
</comment>
<comment type="subunit">
    <text evidence="1">Composed of a catalytic GlpA/B dimer and of membrane bound GlpC.</text>
</comment>
<comment type="similarity">
    <text evidence="1">Belongs to the anaerobic G-3-P dehydrogenase subunit B family.</text>
</comment>
<dbReference type="EC" id="1.1.5.3" evidence="1"/>
<dbReference type="EMBL" id="CU928163">
    <property type="protein sequence ID" value="CAR13765.1"/>
    <property type="molecule type" value="Genomic_DNA"/>
</dbReference>
<dbReference type="RefSeq" id="WP_001209956.1">
    <property type="nucleotide sequence ID" value="NC_011751.1"/>
</dbReference>
<dbReference type="RefSeq" id="YP_002413293.1">
    <property type="nucleotide sequence ID" value="NC_011751.1"/>
</dbReference>
<dbReference type="STRING" id="585056.ECUMN_2582"/>
<dbReference type="KEGG" id="eum:ECUMN_2582"/>
<dbReference type="PATRIC" id="fig|585056.7.peg.2761"/>
<dbReference type="HOGENOM" id="CLU_047793_0_0_6"/>
<dbReference type="UniPathway" id="UPA00618">
    <property type="reaction ID" value="UER00673"/>
</dbReference>
<dbReference type="Proteomes" id="UP000007097">
    <property type="component" value="Chromosome"/>
</dbReference>
<dbReference type="GO" id="GO:0009331">
    <property type="term" value="C:glycerol-3-phosphate dehydrogenase (FAD) complex"/>
    <property type="evidence" value="ECO:0007669"/>
    <property type="project" value="InterPro"/>
</dbReference>
<dbReference type="GO" id="GO:0004368">
    <property type="term" value="F:glycerol-3-phosphate dehydrogenase (quinone) activity"/>
    <property type="evidence" value="ECO:0007669"/>
    <property type="project" value="UniProtKB-UniRule"/>
</dbReference>
<dbReference type="GO" id="GO:0009061">
    <property type="term" value="P:anaerobic respiration"/>
    <property type="evidence" value="ECO:0007669"/>
    <property type="project" value="TreeGrafter"/>
</dbReference>
<dbReference type="GO" id="GO:0019563">
    <property type="term" value="P:glycerol catabolic process"/>
    <property type="evidence" value="ECO:0007669"/>
    <property type="project" value="UniProtKB-UniRule"/>
</dbReference>
<dbReference type="GO" id="GO:0046168">
    <property type="term" value="P:glycerol-3-phosphate catabolic process"/>
    <property type="evidence" value="ECO:0007669"/>
    <property type="project" value="TreeGrafter"/>
</dbReference>
<dbReference type="Gene3D" id="3.50.50.60">
    <property type="entry name" value="FAD/NAD(P)-binding domain"/>
    <property type="match status" value="1"/>
</dbReference>
<dbReference type="HAMAP" id="MF_00753">
    <property type="entry name" value="Glycerol3P_GlpB"/>
    <property type="match status" value="1"/>
</dbReference>
<dbReference type="InterPro" id="IPR003953">
    <property type="entry name" value="FAD-dep_OxRdtase_2_FAD-bd"/>
</dbReference>
<dbReference type="InterPro" id="IPR050315">
    <property type="entry name" value="FAD-oxidoreductase_2"/>
</dbReference>
<dbReference type="InterPro" id="IPR036188">
    <property type="entry name" value="FAD/NAD-bd_sf"/>
</dbReference>
<dbReference type="InterPro" id="IPR009158">
    <property type="entry name" value="G3P_DH_GlpB_su"/>
</dbReference>
<dbReference type="NCBIfam" id="TIGR03378">
    <property type="entry name" value="glycerol3P_GlpB"/>
    <property type="match status" value="1"/>
</dbReference>
<dbReference type="NCBIfam" id="NF003718">
    <property type="entry name" value="PRK05329.1-1"/>
    <property type="match status" value="1"/>
</dbReference>
<dbReference type="NCBIfam" id="NF003719">
    <property type="entry name" value="PRK05329.1-2"/>
    <property type="match status" value="1"/>
</dbReference>
<dbReference type="NCBIfam" id="NF003720">
    <property type="entry name" value="PRK05329.1-3"/>
    <property type="match status" value="1"/>
</dbReference>
<dbReference type="NCBIfam" id="NF003721">
    <property type="entry name" value="PRK05329.1-4"/>
    <property type="match status" value="1"/>
</dbReference>
<dbReference type="PANTHER" id="PTHR43400:SF11">
    <property type="entry name" value="ANAEROBIC GLYCEROL-3-PHOSPHATE DEHYDROGENASE SUBUNIT B"/>
    <property type="match status" value="1"/>
</dbReference>
<dbReference type="PANTHER" id="PTHR43400">
    <property type="entry name" value="FUMARATE REDUCTASE"/>
    <property type="match status" value="1"/>
</dbReference>
<dbReference type="Pfam" id="PF00890">
    <property type="entry name" value="FAD_binding_2"/>
    <property type="match status" value="1"/>
</dbReference>
<dbReference type="PIRSF" id="PIRSF000141">
    <property type="entry name" value="Anaerobic_G3P_dh"/>
    <property type="match status" value="1"/>
</dbReference>
<dbReference type="SUPFAM" id="SSF51905">
    <property type="entry name" value="FAD/NAD(P)-binding domain"/>
    <property type="match status" value="1"/>
</dbReference>
<feature type="chain" id="PRO_1000133360" description="Anaerobic glycerol-3-phosphate dehydrogenase subunit B">
    <location>
        <begin position="1"/>
        <end position="419"/>
    </location>
</feature>
<gene>
    <name evidence="1" type="primary">glpB</name>
    <name type="ordered locus">ECUMN_2582</name>
</gene>
<sequence>MRFDTVIMGGGLAGLLCGLQLQKHGLRCTIVTRGQSALHFSSGSLDLLSHLPDGQPVTDIHSGLESLRQQAPAHPYSVLGPQRVLDLACQAQALIAESGAQLQGSVELAHQRITPLGTLRSTWLSSPEVPVWPLPAKKICVVGISGLMDFQAHLAAASLRELDLKVETAEIELPELDVLRNNATEFRAVNIARFLDNEENWSLLLDALIPVANTCEMILMPACFGLADDKLWRWLNEKLPCSLMLLPTLPPSVLGIRLQNQLQRQFVRQGGVWMPGDEVKKVTCKNGVVNEIWTRNHADIPLRPRFAVLASGSFFSGGLVAERDGIREPILGLDVLQTATRGEWYKGDFFAPQPWQQFGVTTDEALRPSQAGQTIENLFAIGSVLGGFDPIAQGCGGGVCAVSALHAAQQIAQRAGGQQ</sequence>
<organism>
    <name type="scientific">Escherichia coli O17:K52:H18 (strain UMN026 / ExPEC)</name>
    <dbReference type="NCBI Taxonomy" id="585056"/>
    <lineage>
        <taxon>Bacteria</taxon>
        <taxon>Pseudomonadati</taxon>
        <taxon>Pseudomonadota</taxon>
        <taxon>Gammaproteobacteria</taxon>
        <taxon>Enterobacterales</taxon>
        <taxon>Enterobacteriaceae</taxon>
        <taxon>Escherichia</taxon>
    </lineage>
</organism>
<keyword id="KW-0285">Flavoprotein</keyword>
<keyword id="KW-0288">FMN</keyword>
<keyword id="KW-0560">Oxidoreductase</keyword>